<reference key="1">
    <citation type="journal article" date="2019" name="Environ. Microbiol.">
        <title>Orthologous peramine and pyrrolopyrazine-producing biosynthetic gene clusters in Metarhizium rileyi, Metarhizium majus and Cladonia grayi.</title>
        <authorList>
            <person name="Berry D."/>
            <person name="Mace W."/>
            <person name="Rehner S.A."/>
            <person name="Grage K."/>
            <person name="Dijkwel P.P."/>
            <person name="Young C.A."/>
            <person name="Scott B."/>
        </authorList>
    </citation>
    <scope>NUCLEOTIDE SEQUENCE [GENOMIC DNA]</scope>
    <scope>FUNCTION</scope>
    <scope>PATHWAY</scope>
    <source>
        <strain>ARSEF 297</strain>
    </source>
</reference>
<reference key="2">
    <citation type="journal article" date="2024" name="J. Am. Chem. Soc.">
        <title>Two Iron(II), alpha-Ketoglutarate-Dependent Enzymes Encoded by the PPZ Gene Cluster of Metarhizium majus Enable Production of 8-Hydroxyperamine.</title>
        <authorList>
            <person name="Rothchild K.W."/>
            <person name="Hagar M."/>
            <person name="Berry D."/>
            <person name="Ryan K.S."/>
        </authorList>
    </citation>
    <scope>FUNCTION</scope>
    <scope>PATHWAY</scope>
</reference>
<keyword id="KW-0325">Glycoprotein</keyword>
<keyword id="KW-0472">Membrane</keyword>
<keyword id="KW-0812">Transmembrane</keyword>
<keyword id="KW-1133">Transmembrane helix</keyword>
<keyword id="KW-0813">Transport</keyword>
<organism>
    <name type="scientific">Metarhizium majus (strain ARSEF 297)</name>
    <dbReference type="NCBI Taxonomy" id="1276143"/>
    <lineage>
        <taxon>Eukaryota</taxon>
        <taxon>Fungi</taxon>
        <taxon>Dikarya</taxon>
        <taxon>Ascomycota</taxon>
        <taxon>Pezizomycotina</taxon>
        <taxon>Sordariomycetes</taxon>
        <taxon>Hypocreomycetidae</taxon>
        <taxon>Hypocreales</taxon>
        <taxon>Clavicipitaceae</taxon>
        <taxon>Metarhizium</taxon>
        <taxon>Metarhizium majus</taxon>
    </lineage>
</organism>
<proteinExistence type="inferred from homology"/>
<protein>
    <recommendedName>
        <fullName evidence="6">MFS-type transporter ppz2</fullName>
    </recommendedName>
    <alternativeName>
        <fullName evidence="6">Pyrrolopyrazine biosynthesis cluster protein 2</fullName>
    </alternativeName>
</protein>
<gene>
    <name evidence="7" type="primary">ppz2</name>
</gene>
<dbReference type="EMBL" id="BK010672">
    <property type="protein sequence ID" value="DAC76725.1"/>
    <property type="molecule type" value="Genomic_DNA"/>
</dbReference>
<dbReference type="GO" id="GO:0005886">
    <property type="term" value="C:plasma membrane"/>
    <property type="evidence" value="ECO:0007669"/>
    <property type="project" value="TreeGrafter"/>
</dbReference>
<dbReference type="GO" id="GO:0022857">
    <property type="term" value="F:transmembrane transporter activity"/>
    <property type="evidence" value="ECO:0007669"/>
    <property type="project" value="InterPro"/>
</dbReference>
<dbReference type="CDD" id="cd17502">
    <property type="entry name" value="MFS_Azr1_MDR_like"/>
    <property type="match status" value="1"/>
</dbReference>
<dbReference type="FunFam" id="1.20.1250.20:FF:000196">
    <property type="entry name" value="MFS toxin efflux pump (AflT)"/>
    <property type="match status" value="1"/>
</dbReference>
<dbReference type="Gene3D" id="1.20.1250.20">
    <property type="entry name" value="MFS general substrate transporter like domains"/>
    <property type="match status" value="1"/>
</dbReference>
<dbReference type="Gene3D" id="1.20.1720.10">
    <property type="entry name" value="Multidrug resistance protein D"/>
    <property type="match status" value="1"/>
</dbReference>
<dbReference type="InterPro" id="IPR011701">
    <property type="entry name" value="MFS"/>
</dbReference>
<dbReference type="InterPro" id="IPR020846">
    <property type="entry name" value="MFS_dom"/>
</dbReference>
<dbReference type="InterPro" id="IPR036259">
    <property type="entry name" value="MFS_trans_sf"/>
</dbReference>
<dbReference type="PANTHER" id="PTHR23501:SF102">
    <property type="entry name" value="DRUG TRANSPORTER, PUTATIVE (AFU_ORTHOLOGUE AFUA_3G08530)-RELATED"/>
    <property type="match status" value="1"/>
</dbReference>
<dbReference type="PANTHER" id="PTHR23501">
    <property type="entry name" value="MAJOR FACILITATOR SUPERFAMILY"/>
    <property type="match status" value="1"/>
</dbReference>
<dbReference type="Pfam" id="PF07690">
    <property type="entry name" value="MFS_1"/>
    <property type="match status" value="1"/>
</dbReference>
<dbReference type="PRINTS" id="PR01036">
    <property type="entry name" value="TCRTETB"/>
</dbReference>
<dbReference type="SUPFAM" id="SSF103473">
    <property type="entry name" value="MFS general substrate transporter"/>
    <property type="match status" value="1"/>
</dbReference>
<dbReference type="PROSITE" id="PS50850">
    <property type="entry name" value="MFS"/>
    <property type="match status" value="1"/>
</dbReference>
<sequence>MQTATALEDSANAPSPAASSQGQFDREIVPIDTADAGNSTKRSPLKVALIMVALCCAVFLHALDNTIITTALPTITAAFDLDAAYTWIGSTYLLAVAASTMVWAKISDVFGRKPIILSANLCFFTGSLIAALSANFAMLIAARAIQGIGGAGVNVLANICVGDLFSQRKRGLYYGVIGGVWAVALSLGPVVGGSLTESISWRWCFYINLPLCAVVFVIIILLLDVKTPKTPFGKGIAAIDWVGAALSIGSTLMILLALSLGGQTEPWNSATVICLVVFGFIGWILCFSWEASLAKYPLLPVSIFKQIPTLAVLAACFIQSYAFVASAYYLPLYFQAVLGATPILSGVYLLPTAVSISISSTATGVYMRKTGQYLTPIYIGFVLQTLGYGLFIDLGPTANWAKIIVFQIIGGLGVGFNFQAPMVALQAFISPRELAMATSAYNFMRNVSGAISVVIGQTVFQNEMSKHQESLATILGPQLAAKLAGTGASASTDLIRSLPSPQRDVVHGVFANSMKSMWIMYTAFSAAALVVCPFLGKMVLREDHTETVTGLAAENAAREERLRQEKEKKDAKIRKCQVN</sequence>
<feature type="chain" id="PRO_0000461611" description="MFS-type transporter ppz2">
    <location>
        <begin position="1"/>
        <end position="579"/>
    </location>
</feature>
<feature type="transmembrane region" description="Helical" evidence="1">
    <location>
        <begin position="48"/>
        <end position="68"/>
    </location>
</feature>
<feature type="transmembrane region" description="Helical" evidence="1">
    <location>
        <begin position="83"/>
        <end position="103"/>
    </location>
</feature>
<feature type="transmembrane region" description="Helical" evidence="1">
    <location>
        <begin position="121"/>
        <end position="141"/>
    </location>
</feature>
<feature type="transmembrane region" description="Helical" evidence="1">
    <location>
        <begin position="145"/>
        <end position="165"/>
    </location>
</feature>
<feature type="transmembrane region" description="Helical" evidence="1">
    <location>
        <begin position="171"/>
        <end position="191"/>
    </location>
</feature>
<feature type="transmembrane region" description="Helical" evidence="1">
    <location>
        <begin position="203"/>
        <end position="223"/>
    </location>
</feature>
<feature type="transmembrane region" description="Helical" evidence="1">
    <location>
        <begin position="236"/>
        <end position="256"/>
    </location>
</feature>
<feature type="transmembrane region" description="Helical" evidence="1">
    <location>
        <begin position="269"/>
        <end position="289"/>
    </location>
</feature>
<feature type="transmembrane region" description="Helical" evidence="1">
    <location>
        <begin position="298"/>
        <end position="318"/>
    </location>
</feature>
<feature type="transmembrane region" description="Helical" evidence="1">
    <location>
        <begin position="336"/>
        <end position="356"/>
    </location>
</feature>
<feature type="transmembrane region" description="Helical" evidence="1">
    <location>
        <begin position="374"/>
        <end position="394"/>
    </location>
</feature>
<feature type="transmembrane region" description="Helical" evidence="1">
    <location>
        <begin position="403"/>
        <end position="423"/>
    </location>
</feature>
<feature type="transmembrane region" description="Helical" evidence="1">
    <location>
        <begin position="438"/>
        <end position="460"/>
    </location>
</feature>
<feature type="transmembrane region" description="Helical" evidence="1">
    <location>
        <begin position="516"/>
        <end position="536"/>
    </location>
</feature>
<feature type="region of interest" description="Disordered" evidence="3">
    <location>
        <begin position="1"/>
        <end position="23"/>
    </location>
</feature>
<feature type="compositionally biased region" description="Low complexity" evidence="3">
    <location>
        <begin position="10"/>
        <end position="20"/>
    </location>
</feature>
<feature type="glycosylation site" description="N-linked (GlcNAc...) asparagine" evidence="2">
    <location>
        <position position="38"/>
    </location>
</feature>
<evidence type="ECO:0000255" key="1"/>
<evidence type="ECO:0000255" key="2">
    <source>
        <dbReference type="PROSITE-ProRule" id="PRU00498"/>
    </source>
</evidence>
<evidence type="ECO:0000256" key="3">
    <source>
        <dbReference type="SAM" id="MobiDB-lite"/>
    </source>
</evidence>
<evidence type="ECO:0000269" key="4">
    <source>
    </source>
</evidence>
<evidence type="ECO:0000269" key="5">
    <source>
    </source>
</evidence>
<evidence type="ECO:0000303" key="6">
    <source>
    </source>
</evidence>
<evidence type="ECO:0000303" key="7">
    <source>
    </source>
</evidence>
<evidence type="ECO:0000305" key="8"/>
<comment type="function">
    <text evidence="4 5 8">MFS-type transporter; part of the gene cluster that mediates the biosynthesis of pyrrolopyrazines, secondary metabolites showing insecticidal activity (PubMed:30452111, PubMed:38578094). Probably involved in the secretion of peramine and other pyrrolopyrazines (Probable).</text>
</comment>
<comment type="subcellular location">
    <subcellularLocation>
        <location evidence="1">Membrane</location>
        <topology evidence="1">Multi-pass membrane protein</topology>
    </subcellularLocation>
</comment>
<comment type="similarity">
    <text evidence="8">Belongs to the major facilitator superfamily. TCR/Tet family.</text>
</comment>
<name>PPZ2_METMF</name>
<accession>A0A455ZIM6</accession>